<gene>
    <name evidence="1" type="primary">truB</name>
    <name type="ordered locus">RB6411</name>
</gene>
<keyword id="KW-0413">Isomerase</keyword>
<keyword id="KW-1185">Reference proteome</keyword>
<keyword id="KW-0819">tRNA processing</keyword>
<name>TRUB_RHOBA</name>
<accession>P59883</accession>
<feature type="chain" id="PRO_0000121892" description="tRNA pseudouridine synthase B">
    <location>
        <begin position="1"/>
        <end position="348"/>
    </location>
</feature>
<feature type="active site" description="Nucleophile" evidence="1">
    <location>
        <position position="52"/>
    </location>
</feature>
<comment type="function">
    <text evidence="1">Responsible for synthesis of pseudouridine from uracil-55 in the psi GC loop of transfer RNAs.</text>
</comment>
<comment type="catalytic activity">
    <reaction evidence="1">
        <text>uridine(55) in tRNA = pseudouridine(55) in tRNA</text>
        <dbReference type="Rhea" id="RHEA:42532"/>
        <dbReference type="Rhea" id="RHEA-COMP:10101"/>
        <dbReference type="Rhea" id="RHEA-COMP:10102"/>
        <dbReference type="ChEBI" id="CHEBI:65314"/>
        <dbReference type="ChEBI" id="CHEBI:65315"/>
        <dbReference type="EC" id="5.4.99.25"/>
    </reaction>
</comment>
<comment type="similarity">
    <text evidence="1">Belongs to the pseudouridine synthase TruB family. Type 1 subfamily.</text>
</comment>
<protein>
    <recommendedName>
        <fullName evidence="1">tRNA pseudouridine synthase B</fullName>
        <ecNumber evidence="1">5.4.99.25</ecNumber>
    </recommendedName>
    <alternativeName>
        <fullName evidence="1">tRNA pseudouridine(55) synthase</fullName>
        <shortName evidence="1">Psi55 synthase</shortName>
    </alternativeName>
    <alternativeName>
        <fullName evidence="1">tRNA pseudouridylate synthase</fullName>
    </alternativeName>
    <alternativeName>
        <fullName evidence="1">tRNA-uridine isomerase</fullName>
    </alternativeName>
</protein>
<sequence length="348" mass="38421">MDPNGEHSPLGFLPCYKPPGATSRDLVNRAQRRLRGEFGLRKLKVGHTGTLDPLAEGLVLLAIGSAARLTPWVLQHGKRYLADFRLGVSSESGDLESELVTQTDVKLPTAAEIEQVLKDFHGVVEQTPPAHSAIKVDGERAHKRARRGEDFEMPKRRILIDSVKLISYEPPMMRLDVRCGSGTYLRTLGMDVAAACGCAAVMTKLIRNEVGRFTLDDTLDCAFMFDDDDREKMSSEPMVKYLRPAIEGLTHMPAMNLDRQQIGMLQAGIRISGTPEAPSEPLPEAWIGCIDQVDTFDRNTDVLDCIGVDRSDGSSGPWGELVAILRPHGKLWHPLRVFPTTESITLRG</sequence>
<organism>
    <name type="scientific">Rhodopirellula baltica (strain DSM 10527 / NCIMB 13988 / SH1)</name>
    <dbReference type="NCBI Taxonomy" id="243090"/>
    <lineage>
        <taxon>Bacteria</taxon>
        <taxon>Pseudomonadati</taxon>
        <taxon>Planctomycetota</taxon>
        <taxon>Planctomycetia</taxon>
        <taxon>Pirellulales</taxon>
        <taxon>Pirellulaceae</taxon>
        <taxon>Rhodopirellula</taxon>
    </lineage>
</organism>
<dbReference type="EC" id="5.4.99.25" evidence="1"/>
<dbReference type="EMBL" id="BX294144">
    <property type="protein sequence ID" value="CAD74785.1"/>
    <property type="molecule type" value="Genomic_DNA"/>
</dbReference>
<dbReference type="RefSeq" id="NP_867239.1">
    <property type="nucleotide sequence ID" value="NC_005027.1"/>
</dbReference>
<dbReference type="RefSeq" id="WP_011120904.1">
    <property type="nucleotide sequence ID" value="NC_005027.1"/>
</dbReference>
<dbReference type="SMR" id="P59883"/>
<dbReference type="FunCoup" id="P59883">
    <property type="interactions" value="483"/>
</dbReference>
<dbReference type="STRING" id="243090.RB6411"/>
<dbReference type="EnsemblBacteria" id="CAD74785">
    <property type="protein sequence ID" value="CAD74785"/>
    <property type="gene ID" value="RB6411"/>
</dbReference>
<dbReference type="KEGG" id="rba:RB6411"/>
<dbReference type="PATRIC" id="fig|243090.15.peg.3098"/>
<dbReference type="eggNOG" id="COG0130">
    <property type="taxonomic scope" value="Bacteria"/>
</dbReference>
<dbReference type="HOGENOM" id="CLU_032087_0_0_0"/>
<dbReference type="InParanoid" id="P59883"/>
<dbReference type="OrthoDB" id="9802309at2"/>
<dbReference type="Proteomes" id="UP000001025">
    <property type="component" value="Chromosome"/>
</dbReference>
<dbReference type="GO" id="GO:0009982">
    <property type="term" value="F:pseudouridine synthase activity"/>
    <property type="evidence" value="ECO:0000318"/>
    <property type="project" value="GO_Central"/>
</dbReference>
<dbReference type="GO" id="GO:0003723">
    <property type="term" value="F:RNA binding"/>
    <property type="evidence" value="ECO:0007669"/>
    <property type="project" value="InterPro"/>
</dbReference>
<dbReference type="GO" id="GO:0160148">
    <property type="term" value="F:tRNA pseudouridine(55) synthase activity"/>
    <property type="evidence" value="ECO:0007669"/>
    <property type="project" value="UniProtKB-EC"/>
</dbReference>
<dbReference type="GO" id="GO:1990481">
    <property type="term" value="P:mRNA pseudouridine synthesis"/>
    <property type="evidence" value="ECO:0000318"/>
    <property type="project" value="GO_Central"/>
</dbReference>
<dbReference type="GO" id="GO:0006400">
    <property type="term" value="P:tRNA modification"/>
    <property type="evidence" value="ECO:0000318"/>
    <property type="project" value="GO_Central"/>
</dbReference>
<dbReference type="GO" id="GO:0031119">
    <property type="term" value="P:tRNA pseudouridine synthesis"/>
    <property type="evidence" value="ECO:0007669"/>
    <property type="project" value="UniProtKB-UniRule"/>
</dbReference>
<dbReference type="CDD" id="cd02573">
    <property type="entry name" value="PseudoU_synth_EcTruB"/>
    <property type="match status" value="1"/>
</dbReference>
<dbReference type="Gene3D" id="3.30.2350.10">
    <property type="entry name" value="Pseudouridine synthase"/>
    <property type="match status" value="1"/>
</dbReference>
<dbReference type="HAMAP" id="MF_01080">
    <property type="entry name" value="TruB_bact"/>
    <property type="match status" value="1"/>
</dbReference>
<dbReference type="InterPro" id="IPR020103">
    <property type="entry name" value="PsdUridine_synth_cat_dom_sf"/>
</dbReference>
<dbReference type="InterPro" id="IPR002501">
    <property type="entry name" value="PsdUridine_synth_N"/>
</dbReference>
<dbReference type="InterPro" id="IPR014780">
    <property type="entry name" value="tRNA_psdUridine_synth_TruB"/>
</dbReference>
<dbReference type="NCBIfam" id="TIGR00431">
    <property type="entry name" value="TruB"/>
    <property type="match status" value="1"/>
</dbReference>
<dbReference type="PANTHER" id="PTHR13767:SF2">
    <property type="entry name" value="PSEUDOURIDYLATE SYNTHASE TRUB1"/>
    <property type="match status" value="1"/>
</dbReference>
<dbReference type="PANTHER" id="PTHR13767">
    <property type="entry name" value="TRNA-PSEUDOURIDINE SYNTHASE"/>
    <property type="match status" value="1"/>
</dbReference>
<dbReference type="Pfam" id="PF01509">
    <property type="entry name" value="TruB_N"/>
    <property type="match status" value="1"/>
</dbReference>
<dbReference type="SUPFAM" id="SSF55120">
    <property type="entry name" value="Pseudouridine synthase"/>
    <property type="match status" value="1"/>
</dbReference>
<evidence type="ECO:0000255" key="1">
    <source>
        <dbReference type="HAMAP-Rule" id="MF_01080"/>
    </source>
</evidence>
<proteinExistence type="inferred from homology"/>
<reference key="1">
    <citation type="journal article" date="2003" name="Proc. Natl. Acad. Sci. U.S.A.">
        <title>Complete genome sequence of the marine planctomycete Pirellula sp. strain 1.</title>
        <authorList>
            <person name="Gloeckner F.O."/>
            <person name="Kube M."/>
            <person name="Bauer M."/>
            <person name="Teeling H."/>
            <person name="Lombardot T."/>
            <person name="Ludwig W."/>
            <person name="Gade D."/>
            <person name="Beck A."/>
            <person name="Borzym K."/>
            <person name="Heitmann K."/>
            <person name="Rabus R."/>
            <person name="Schlesner H."/>
            <person name="Amann R."/>
            <person name="Reinhardt R."/>
        </authorList>
    </citation>
    <scope>NUCLEOTIDE SEQUENCE [LARGE SCALE GENOMIC DNA]</scope>
    <source>
        <strain>DSM 10527 / NCIMB 13988 / SH1</strain>
    </source>
</reference>